<reference key="1">
    <citation type="submission" date="2005-08" db="EMBL/GenBank/DDBJ databases">
        <authorList>
            <consortium name="NIH - Mammalian Gene Collection (MGC) project"/>
        </authorList>
    </citation>
    <scope>NUCLEOTIDE SEQUENCE [LARGE SCALE MRNA]</scope>
    <source>
        <strain>Crossbred X Angus</strain>
        <tissue>Liver</tissue>
    </source>
</reference>
<keyword id="KW-0256">Endoplasmic reticulum</keyword>
<keyword id="KW-0325">Glycoprotein</keyword>
<keyword id="KW-0472">Membrane</keyword>
<keyword id="KW-1185">Reference proteome</keyword>
<keyword id="KW-0735">Signal-anchor</keyword>
<keyword id="KW-0812">Transmembrane</keyword>
<keyword id="KW-1133">Transmembrane helix</keyword>
<organism>
    <name type="scientific">Bos taurus</name>
    <name type="common">Bovine</name>
    <dbReference type="NCBI Taxonomy" id="9913"/>
    <lineage>
        <taxon>Eukaryota</taxon>
        <taxon>Metazoa</taxon>
        <taxon>Chordata</taxon>
        <taxon>Craniata</taxon>
        <taxon>Vertebrata</taxon>
        <taxon>Euteleostomi</taxon>
        <taxon>Mammalia</taxon>
        <taxon>Eutheria</taxon>
        <taxon>Laurasiatheria</taxon>
        <taxon>Artiodactyla</taxon>
        <taxon>Ruminantia</taxon>
        <taxon>Pecora</taxon>
        <taxon>Bovidae</taxon>
        <taxon>Bovinae</taxon>
        <taxon>Bos</taxon>
    </lineage>
</organism>
<proteinExistence type="evidence at transcript level"/>
<comment type="function">
    <text evidence="2 3">Essential component of the signal peptidase complex (SPC) which catalyzes the cleavage of N-terminal signal sequences from nascent proteins as they are translocated into the lumen of the endoplasmic reticulum (By similarity). Essential for the SPC catalytic activity, possibly by stabilizing and positioning the active center of the complex close to the lumenal surface (By similarity).</text>
</comment>
<comment type="subunit">
    <text evidence="2">Component of the signal peptidase complex paralog A (SPC-A) composed of a catalytic subunit SEC11A and three accessory subunits SPCS1, SPCS2 and SPCS3. Component of the signal peptidase complex paralog C (SPC-C) composed of a catalytic subunit SEC11C and three accessory subunits SPCS1, SPCS2 and SPCS3. Within the complex, interacts with SEC11A or SEC11C and SPCS1. The complex induces a local thinning of the ER membrane which is used to measure the length of the signal peptide (SP) h-region of protein substrates. This ensures the selectivity of the complex towards h-regions shorter than 18-20 amino acids.</text>
</comment>
<comment type="subcellular location">
    <subcellularLocation>
        <location evidence="1">Endoplasmic reticulum membrane</location>
        <topology evidence="1">Single-pass type II membrane protein</topology>
    </subcellularLocation>
</comment>
<comment type="similarity">
    <text evidence="5">Belongs to the SPCS3 family.</text>
</comment>
<gene>
    <name type="primary">SPCS3</name>
</gene>
<feature type="chain" id="PRO_0000244604" description="Signal peptidase complex subunit 3">
    <location>
        <begin position="1"/>
        <end position="180"/>
    </location>
</feature>
<feature type="topological domain" description="Cytoplasmic" evidence="1">
    <location>
        <begin position="1"/>
        <end position="11"/>
    </location>
</feature>
<feature type="transmembrane region" description="Helical; Signal-anchor for type II membrane protein" evidence="4">
    <location>
        <begin position="12"/>
        <end position="32"/>
    </location>
</feature>
<feature type="topological domain" description="Lumenal" evidence="1">
    <location>
        <begin position="33"/>
        <end position="180"/>
    </location>
</feature>
<feature type="glycosylation site" description="N-linked (GlcNAc...) asparagine" evidence="4">
    <location>
        <position position="141"/>
    </location>
</feature>
<accession>Q3SZU5</accession>
<name>SPCS3_BOVIN</name>
<sequence length="180" mass="20313">MNTVLSRANSLFAFSLSVMAALTFGCFITTAFKDRSVPVRLHVSRIMLKNVEDFTGPRERSDLGFITFDITADLENIFDWNVKQLFLYLSAEYSTKNNALNQVVLWDKIVLRGDNPKLLLKDMKTKYFFFDDGNGLKGNRNVTLTLSWNVVPNAGILPLVTGSGHVSVPFPDTYEITKSY</sequence>
<protein>
    <recommendedName>
        <fullName>Signal peptidase complex subunit 3</fullName>
    </recommendedName>
    <alternativeName>
        <fullName>Microsomal signal peptidase 22/23 kDa subunit</fullName>
        <shortName>SPC22/23</shortName>
        <shortName>SPase 22/23 kDa subunit</shortName>
    </alternativeName>
</protein>
<evidence type="ECO:0000250" key="1">
    <source>
        <dbReference type="UniProtKB" id="P61008"/>
    </source>
</evidence>
<evidence type="ECO:0000250" key="2">
    <source>
        <dbReference type="UniProtKB" id="P61009"/>
    </source>
</evidence>
<evidence type="ECO:0000250" key="3">
    <source>
        <dbReference type="UniProtKB" id="Q12133"/>
    </source>
</evidence>
<evidence type="ECO:0000255" key="4"/>
<evidence type="ECO:0000305" key="5"/>
<dbReference type="EMBL" id="BC102708">
    <property type="protein sequence ID" value="AAI02709.1"/>
    <property type="molecule type" value="mRNA"/>
</dbReference>
<dbReference type="RefSeq" id="NP_001070461.1">
    <property type="nucleotide sequence ID" value="NM_001076993.1"/>
</dbReference>
<dbReference type="SMR" id="Q3SZU5"/>
<dbReference type="FunCoup" id="Q3SZU5">
    <property type="interactions" value="1890"/>
</dbReference>
<dbReference type="STRING" id="9913.ENSBTAP00000018803"/>
<dbReference type="GlyCosmos" id="Q3SZU5">
    <property type="glycosylation" value="1 site, No reported glycans"/>
</dbReference>
<dbReference type="GlyGen" id="Q3SZU5">
    <property type="glycosylation" value="1 site"/>
</dbReference>
<dbReference type="PeptideAtlas" id="Q3SZU5"/>
<dbReference type="GeneID" id="767917"/>
<dbReference type="KEGG" id="bta:767917"/>
<dbReference type="CTD" id="60559"/>
<dbReference type="VEuPathDB" id="HostDB:ENSBTAG00000014146"/>
<dbReference type="InParanoid" id="Q3SZU5"/>
<dbReference type="OMA" id="FWDDGHG"/>
<dbReference type="OrthoDB" id="10261524at2759"/>
<dbReference type="Reactome" id="R-BTA-422085">
    <property type="pathway name" value="Synthesis, secretion, and deacylation of Ghrelin"/>
</dbReference>
<dbReference type="Proteomes" id="UP000009136">
    <property type="component" value="Chromosome 27"/>
</dbReference>
<dbReference type="Bgee" id="ENSBTAG00000014146">
    <property type="expression patterns" value="Expressed in spermatocyte and 106 other cell types or tissues"/>
</dbReference>
<dbReference type="GO" id="GO:0005787">
    <property type="term" value="C:signal peptidase complex"/>
    <property type="evidence" value="ECO:0000318"/>
    <property type="project" value="GO_Central"/>
</dbReference>
<dbReference type="GO" id="GO:0045047">
    <property type="term" value="P:protein targeting to ER"/>
    <property type="evidence" value="ECO:0000318"/>
    <property type="project" value="GO_Central"/>
</dbReference>
<dbReference type="GO" id="GO:0006465">
    <property type="term" value="P:signal peptide processing"/>
    <property type="evidence" value="ECO:0000318"/>
    <property type="project" value="GO_Central"/>
</dbReference>
<dbReference type="InterPro" id="IPR007653">
    <property type="entry name" value="SPC3"/>
</dbReference>
<dbReference type="PANTHER" id="PTHR12804">
    <property type="entry name" value="MICROSOMAL SIGNAL PEPTIDASE 23 KD SUBUNIT SPC22/23"/>
    <property type="match status" value="1"/>
</dbReference>
<dbReference type="PANTHER" id="PTHR12804:SF0">
    <property type="entry name" value="SIGNAL PEPTIDASE COMPLEX SUBUNIT 3"/>
    <property type="match status" value="1"/>
</dbReference>
<dbReference type="Pfam" id="PF04573">
    <property type="entry name" value="SPC22"/>
    <property type="match status" value="1"/>
</dbReference>
<dbReference type="PIRSF" id="PIRSF016089">
    <property type="entry name" value="SPC22"/>
    <property type="match status" value="1"/>
</dbReference>